<comment type="function">
    <text evidence="2">Forms part of the ribosomal stalk which helps the ribosome interact with GTP-bound translation factors.</text>
</comment>
<comment type="subunit">
    <text evidence="2">Part of the ribosomal stalk of the 50S ribosomal subunit. Interacts with L10 and the large rRNA to form the base of the stalk. L10 forms an elongated spine to which L12 dimers bind in a sequential fashion forming a multimeric L10(L12)X complex.</text>
</comment>
<comment type="PTM">
    <text evidence="2">One or more lysine residues are methylated.</text>
</comment>
<comment type="similarity">
    <text evidence="2">Belongs to the universal ribosomal protein uL11 family.</text>
</comment>
<name>RL11_MYCPN</name>
<organism>
    <name type="scientific">Mycoplasma pneumoniae (strain ATCC 29342 / M129 / Subtype 1)</name>
    <name type="common">Mycoplasmoides pneumoniae</name>
    <dbReference type="NCBI Taxonomy" id="272634"/>
    <lineage>
        <taxon>Bacteria</taxon>
        <taxon>Bacillati</taxon>
        <taxon>Mycoplasmatota</taxon>
        <taxon>Mycoplasmoidales</taxon>
        <taxon>Mycoplasmoidaceae</taxon>
        <taxon>Mycoplasmoides</taxon>
    </lineage>
</organism>
<keyword id="KW-0002">3D-structure</keyword>
<keyword id="KW-0488">Methylation</keyword>
<keyword id="KW-1185">Reference proteome</keyword>
<keyword id="KW-0687">Ribonucleoprotein</keyword>
<keyword id="KW-0689">Ribosomal protein</keyword>
<keyword id="KW-0694">RNA-binding</keyword>
<keyword id="KW-0699">rRNA-binding</keyword>
<dbReference type="EMBL" id="U00089">
    <property type="protein sequence ID" value="AAB96260.1"/>
    <property type="molecule type" value="Genomic_DNA"/>
</dbReference>
<dbReference type="PIR" id="S73938">
    <property type="entry name" value="S73938"/>
</dbReference>
<dbReference type="RefSeq" id="NP_109907.1">
    <property type="nucleotide sequence ID" value="NC_000912.1"/>
</dbReference>
<dbReference type="RefSeq" id="WP_010874576.1">
    <property type="nucleotide sequence ID" value="NZ_OU342337.1"/>
</dbReference>
<dbReference type="PDB" id="7OOD">
    <property type="method" value="EM"/>
    <property type="resolution" value="3.40 A"/>
    <property type="chains" value="h=1-137"/>
</dbReference>
<dbReference type="PDB" id="7P6Z">
    <property type="method" value="EM"/>
    <property type="resolution" value="3.50 A"/>
    <property type="chains" value="h=1-137"/>
</dbReference>
<dbReference type="PDB" id="7PAH">
    <property type="method" value="EM"/>
    <property type="resolution" value="9.50 A"/>
    <property type="chains" value="h=1-137"/>
</dbReference>
<dbReference type="PDB" id="7PAI">
    <property type="method" value="EM"/>
    <property type="resolution" value="6.70 A"/>
    <property type="chains" value="h=1-137"/>
</dbReference>
<dbReference type="PDB" id="7PAJ">
    <property type="method" value="EM"/>
    <property type="resolution" value="7.30 A"/>
    <property type="chains" value="h=1-137"/>
</dbReference>
<dbReference type="PDB" id="7PAK">
    <property type="method" value="EM"/>
    <property type="resolution" value="5.30 A"/>
    <property type="chains" value="h=1-137"/>
</dbReference>
<dbReference type="PDB" id="7PAL">
    <property type="method" value="EM"/>
    <property type="resolution" value="4.70 A"/>
    <property type="chains" value="h=1-137"/>
</dbReference>
<dbReference type="PDB" id="7PAM">
    <property type="method" value="EM"/>
    <property type="resolution" value="6.80 A"/>
    <property type="chains" value="h=1-137"/>
</dbReference>
<dbReference type="PDB" id="7PAN">
    <property type="method" value="EM"/>
    <property type="resolution" value="9.70 A"/>
    <property type="chains" value="h=1-137"/>
</dbReference>
<dbReference type="PDB" id="7PAO">
    <property type="method" value="EM"/>
    <property type="resolution" value="7.00 A"/>
    <property type="chains" value="h=1-137"/>
</dbReference>
<dbReference type="PDB" id="7PAQ">
    <property type="method" value="EM"/>
    <property type="resolution" value="8.90 A"/>
    <property type="chains" value="h=1-137"/>
</dbReference>
<dbReference type="PDB" id="7PAR">
    <property type="method" value="EM"/>
    <property type="resolution" value="8.20 A"/>
    <property type="chains" value="h=1-137"/>
</dbReference>
<dbReference type="PDB" id="7PAS">
    <property type="method" value="EM"/>
    <property type="resolution" value="16.00 A"/>
    <property type="chains" value="h=1-137"/>
</dbReference>
<dbReference type="PDB" id="7PAT">
    <property type="method" value="EM"/>
    <property type="resolution" value="9.20 A"/>
    <property type="chains" value="h=1-137"/>
</dbReference>
<dbReference type="PDB" id="7PAU">
    <property type="method" value="EM"/>
    <property type="resolution" value="8.30 A"/>
    <property type="chains" value="h=1-137"/>
</dbReference>
<dbReference type="PDB" id="7PH9">
    <property type="method" value="EM"/>
    <property type="resolution" value="8.70 A"/>
    <property type="chains" value="h=1-137"/>
</dbReference>
<dbReference type="PDB" id="7PHA">
    <property type="method" value="EM"/>
    <property type="resolution" value="8.50 A"/>
    <property type="chains" value="h=1-137"/>
</dbReference>
<dbReference type="PDB" id="7PHB">
    <property type="method" value="EM"/>
    <property type="resolution" value="4.90 A"/>
    <property type="chains" value="h=1-137"/>
</dbReference>
<dbReference type="PDB" id="7PHC">
    <property type="method" value="EM"/>
    <property type="resolution" value="9.90 A"/>
    <property type="chains" value="h=1-137"/>
</dbReference>
<dbReference type="PDB" id="7PI8">
    <property type="method" value="EM"/>
    <property type="resolution" value="8.90 A"/>
    <property type="chains" value="h=1-137"/>
</dbReference>
<dbReference type="PDB" id="7PI9">
    <property type="method" value="EM"/>
    <property type="resolution" value="6.30 A"/>
    <property type="chains" value="h=1-137"/>
</dbReference>
<dbReference type="PDB" id="7PIA">
    <property type="method" value="EM"/>
    <property type="resolution" value="13.60 A"/>
    <property type="chains" value="h=1-137"/>
</dbReference>
<dbReference type="PDB" id="7PIB">
    <property type="method" value="EM"/>
    <property type="resolution" value="4.70 A"/>
    <property type="chains" value="h=1-137"/>
</dbReference>
<dbReference type="PDB" id="7PIC">
    <property type="method" value="EM"/>
    <property type="resolution" value="9.10 A"/>
    <property type="chains" value="h=1-137"/>
</dbReference>
<dbReference type="PDB" id="7PIO">
    <property type="method" value="EM"/>
    <property type="resolution" value="9.50 A"/>
    <property type="chains" value="h=1-137"/>
</dbReference>
<dbReference type="PDB" id="7PIP">
    <property type="method" value="EM"/>
    <property type="resolution" value="9.30 A"/>
    <property type="chains" value="h=1-137"/>
</dbReference>
<dbReference type="PDB" id="7PIQ">
    <property type="method" value="EM"/>
    <property type="resolution" value="9.70 A"/>
    <property type="chains" value="h=1-137"/>
</dbReference>
<dbReference type="PDB" id="7PIR">
    <property type="method" value="EM"/>
    <property type="resolution" value="12.10 A"/>
    <property type="chains" value="h=1-137"/>
</dbReference>
<dbReference type="PDB" id="7PIS">
    <property type="method" value="EM"/>
    <property type="resolution" value="15.00 A"/>
    <property type="chains" value="h=1-137"/>
</dbReference>
<dbReference type="PDB" id="7PIT">
    <property type="method" value="EM"/>
    <property type="resolution" value="5.70 A"/>
    <property type="chains" value="h=1-137"/>
</dbReference>
<dbReference type="PDB" id="8P7X">
    <property type="method" value="EM"/>
    <property type="resolution" value="3.03 A"/>
    <property type="chains" value="h=1-137"/>
</dbReference>
<dbReference type="PDB" id="8P7Y">
    <property type="method" value="EM"/>
    <property type="resolution" value="3.70 A"/>
    <property type="chains" value="h=1-137"/>
</dbReference>
<dbReference type="PDB" id="8P8B">
    <property type="method" value="EM"/>
    <property type="resolution" value="2.90 A"/>
    <property type="chains" value="h=1-137"/>
</dbReference>
<dbReference type="PDB" id="8P8V">
    <property type="method" value="EM"/>
    <property type="resolution" value="8.70 A"/>
    <property type="chains" value="h=1-137"/>
</dbReference>
<dbReference type="PDB" id="8P8W">
    <property type="method" value="EM"/>
    <property type="resolution" value="8.70 A"/>
    <property type="chains" value="h=1-137"/>
</dbReference>
<dbReference type="PDBsum" id="7OOD"/>
<dbReference type="PDBsum" id="7P6Z"/>
<dbReference type="PDBsum" id="7PAH"/>
<dbReference type="PDBsum" id="7PAI"/>
<dbReference type="PDBsum" id="7PAJ"/>
<dbReference type="PDBsum" id="7PAK"/>
<dbReference type="PDBsum" id="7PAL"/>
<dbReference type="PDBsum" id="7PAM"/>
<dbReference type="PDBsum" id="7PAN"/>
<dbReference type="PDBsum" id="7PAO"/>
<dbReference type="PDBsum" id="7PAQ"/>
<dbReference type="PDBsum" id="7PAR"/>
<dbReference type="PDBsum" id="7PAS"/>
<dbReference type="PDBsum" id="7PAT"/>
<dbReference type="PDBsum" id="7PAU"/>
<dbReference type="PDBsum" id="7PH9"/>
<dbReference type="PDBsum" id="7PHA"/>
<dbReference type="PDBsum" id="7PHB"/>
<dbReference type="PDBsum" id="7PHC"/>
<dbReference type="PDBsum" id="7PI8"/>
<dbReference type="PDBsum" id="7PI9"/>
<dbReference type="PDBsum" id="7PIA"/>
<dbReference type="PDBsum" id="7PIB"/>
<dbReference type="PDBsum" id="7PIC"/>
<dbReference type="PDBsum" id="7PIO"/>
<dbReference type="PDBsum" id="7PIP"/>
<dbReference type="PDBsum" id="7PIQ"/>
<dbReference type="PDBsum" id="7PIR"/>
<dbReference type="PDBsum" id="7PIS"/>
<dbReference type="PDBsum" id="7PIT"/>
<dbReference type="PDBsum" id="8P7X"/>
<dbReference type="PDBsum" id="8P7Y"/>
<dbReference type="PDBsum" id="8P8B"/>
<dbReference type="PDBsum" id="8P8V"/>
<dbReference type="PDBsum" id="8P8W"/>
<dbReference type="EMDB" id="EMD-13234"/>
<dbReference type="EMDB" id="EMD-13272"/>
<dbReference type="EMDB" id="EMD-13273"/>
<dbReference type="EMDB" id="EMD-13274"/>
<dbReference type="EMDB" id="EMD-13275"/>
<dbReference type="EMDB" id="EMD-13276"/>
<dbReference type="EMDB" id="EMD-13277"/>
<dbReference type="EMDB" id="EMD-13278"/>
<dbReference type="EMDB" id="EMD-13279"/>
<dbReference type="EMDB" id="EMD-13280"/>
<dbReference type="EMDB" id="EMD-13281"/>
<dbReference type="EMDB" id="EMD-13282"/>
<dbReference type="EMDB" id="EMD-13285"/>
<dbReference type="EMDB" id="EMD-13286"/>
<dbReference type="EMDB" id="EMD-13410"/>
<dbReference type="EMDB" id="EMD-13411"/>
<dbReference type="EMDB" id="EMD-13412"/>
<dbReference type="EMDB" id="EMD-13413"/>
<dbReference type="EMDB" id="EMD-13432"/>
<dbReference type="EMDB" id="EMD-13433"/>
<dbReference type="EMDB" id="EMD-13434"/>
<dbReference type="EMDB" id="EMD-13435"/>
<dbReference type="EMDB" id="EMD-13436"/>
<dbReference type="EMDB" id="EMD-13445"/>
<dbReference type="EMDB" id="EMD-13446"/>
<dbReference type="EMDB" id="EMD-13447"/>
<dbReference type="EMDB" id="EMD-13448"/>
<dbReference type="EMDB" id="EMD-13449"/>
<dbReference type="EMDB" id="EMD-13450"/>
<dbReference type="SMR" id="P75550"/>
<dbReference type="IntAct" id="P75550">
    <property type="interactions" value="5"/>
</dbReference>
<dbReference type="STRING" id="272634.MPN_219"/>
<dbReference type="EnsemblBacteria" id="AAB96260">
    <property type="protein sequence ID" value="AAB96260"/>
    <property type="gene ID" value="MPN_219"/>
</dbReference>
<dbReference type="GeneID" id="66609135"/>
<dbReference type="KEGG" id="mpn:MPN_219"/>
<dbReference type="PATRIC" id="fig|272634.6.peg.238"/>
<dbReference type="HOGENOM" id="CLU_074237_2_2_14"/>
<dbReference type="OrthoDB" id="9802408at2"/>
<dbReference type="BioCyc" id="MPNE272634:G1GJ3-354-MONOMER"/>
<dbReference type="Proteomes" id="UP000000808">
    <property type="component" value="Chromosome"/>
</dbReference>
<dbReference type="GO" id="GO:0022625">
    <property type="term" value="C:cytosolic large ribosomal subunit"/>
    <property type="evidence" value="ECO:0007669"/>
    <property type="project" value="TreeGrafter"/>
</dbReference>
<dbReference type="GO" id="GO:0070180">
    <property type="term" value="F:large ribosomal subunit rRNA binding"/>
    <property type="evidence" value="ECO:0007669"/>
    <property type="project" value="UniProtKB-UniRule"/>
</dbReference>
<dbReference type="GO" id="GO:0003735">
    <property type="term" value="F:structural constituent of ribosome"/>
    <property type="evidence" value="ECO:0007669"/>
    <property type="project" value="InterPro"/>
</dbReference>
<dbReference type="GO" id="GO:0006412">
    <property type="term" value="P:translation"/>
    <property type="evidence" value="ECO:0007669"/>
    <property type="project" value="UniProtKB-UniRule"/>
</dbReference>
<dbReference type="CDD" id="cd00349">
    <property type="entry name" value="Ribosomal_L11"/>
    <property type="match status" value="1"/>
</dbReference>
<dbReference type="FunFam" id="3.30.1550.10:FF:000006">
    <property type="entry name" value="50S ribosomal protein L11"/>
    <property type="match status" value="1"/>
</dbReference>
<dbReference type="Gene3D" id="1.10.10.250">
    <property type="entry name" value="Ribosomal protein L11, C-terminal domain"/>
    <property type="match status" value="1"/>
</dbReference>
<dbReference type="Gene3D" id="3.30.1550.10">
    <property type="entry name" value="Ribosomal protein L11/L12, N-terminal domain"/>
    <property type="match status" value="1"/>
</dbReference>
<dbReference type="HAMAP" id="MF_00736">
    <property type="entry name" value="Ribosomal_uL11"/>
    <property type="match status" value="1"/>
</dbReference>
<dbReference type="InterPro" id="IPR000911">
    <property type="entry name" value="Ribosomal_uL11"/>
</dbReference>
<dbReference type="InterPro" id="IPR006519">
    <property type="entry name" value="Ribosomal_uL11_bac-typ"/>
</dbReference>
<dbReference type="InterPro" id="IPR020783">
    <property type="entry name" value="Ribosomal_uL11_C"/>
</dbReference>
<dbReference type="InterPro" id="IPR036769">
    <property type="entry name" value="Ribosomal_uL11_C_sf"/>
</dbReference>
<dbReference type="InterPro" id="IPR020785">
    <property type="entry name" value="Ribosomal_uL11_CS"/>
</dbReference>
<dbReference type="InterPro" id="IPR020784">
    <property type="entry name" value="Ribosomal_uL11_N"/>
</dbReference>
<dbReference type="InterPro" id="IPR036796">
    <property type="entry name" value="Ribosomal_uL11_N_sf"/>
</dbReference>
<dbReference type="NCBIfam" id="TIGR01632">
    <property type="entry name" value="L11_bact"/>
    <property type="match status" value="1"/>
</dbReference>
<dbReference type="PANTHER" id="PTHR11661">
    <property type="entry name" value="60S RIBOSOMAL PROTEIN L12"/>
    <property type="match status" value="1"/>
</dbReference>
<dbReference type="PANTHER" id="PTHR11661:SF1">
    <property type="entry name" value="LARGE RIBOSOMAL SUBUNIT PROTEIN UL11M"/>
    <property type="match status" value="1"/>
</dbReference>
<dbReference type="Pfam" id="PF00298">
    <property type="entry name" value="Ribosomal_L11"/>
    <property type="match status" value="1"/>
</dbReference>
<dbReference type="Pfam" id="PF03946">
    <property type="entry name" value="Ribosomal_L11_N"/>
    <property type="match status" value="1"/>
</dbReference>
<dbReference type="SMART" id="SM00649">
    <property type="entry name" value="RL11"/>
    <property type="match status" value="1"/>
</dbReference>
<dbReference type="SUPFAM" id="SSF54747">
    <property type="entry name" value="Ribosomal L11/L12e N-terminal domain"/>
    <property type="match status" value="1"/>
</dbReference>
<dbReference type="SUPFAM" id="SSF46906">
    <property type="entry name" value="Ribosomal protein L11, C-terminal domain"/>
    <property type="match status" value="1"/>
</dbReference>
<dbReference type="PROSITE" id="PS00359">
    <property type="entry name" value="RIBOSOMAL_L11"/>
    <property type="match status" value="1"/>
</dbReference>
<accession>P75550</accession>
<evidence type="ECO:0000250" key="1"/>
<evidence type="ECO:0000255" key="2">
    <source>
        <dbReference type="HAMAP-Rule" id="MF_00736"/>
    </source>
</evidence>
<evidence type="ECO:0000305" key="3"/>
<evidence type="ECO:0007829" key="4">
    <source>
        <dbReference type="PDB" id="7OOD"/>
    </source>
</evidence>
<evidence type="ECO:0007829" key="5">
    <source>
        <dbReference type="PDB" id="8P8B"/>
    </source>
</evidence>
<proteinExistence type="evidence at protein level"/>
<gene>
    <name evidence="2" type="primary">rplK</name>
    <name type="ordered locus">MPN_219</name>
    <name type="ORF">MP612</name>
</gene>
<feature type="initiator methionine" description="Removed" evidence="1">
    <location>
        <position position="1"/>
    </location>
</feature>
<feature type="chain" id="PRO_0000104323" description="Large ribosomal subunit protein uL11">
    <location>
        <begin position="2"/>
        <end position="137"/>
    </location>
</feature>
<feature type="strand" evidence="5">
    <location>
        <begin position="10"/>
        <end position="12"/>
    </location>
</feature>
<feature type="strand" evidence="5">
    <location>
        <begin position="15"/>
        <end position="17"/>
    </location>
</feature>
<feature type="helix" evidence="5">
    <location>
        <begin position="24"/>
        <end position="27"/>
    </location>
</feature>
<feature type="helix" evidence="5">
    <location>
        <begin position="32"/>
        <end position="41"/>
    </location>
</feature>
<feature type="helix" evidence="5">
    <location>
        <begin position="44"/>
        <end position="46"/>
    </location>
</feature>
<feature type="strand" evidence="5">
    <location>
        <begin position="53"/>
        <end position="55"/>
    </location>
</feature>
<feature type="strand" evidence="5">
    <location>
        <begin position="65"/>
        <end position="67"/>
    </location>
</feature>
<feature type="helix" evidence="5">
    <location>
        <begin position="74"/>
        <end position="79"/>
    </location>
</feature>
<feature type="strand" evidence="5">
    <location>
        <begin position="87"/>
        <end position="91"/>
    </location>
</feature>
<feature type="strand" evidence="4">
    <location>
        <begin position="95"/>
        <end position="97"/>
    </location>
</feature>
<feature type="helix" evidence="5">
    <location>
        <begin position="98"/>
        <end position="108"/>
    </location>
</feature>
<feature type="turn" evidence="5">
    <location>
        <begin position="109"/>
        <end position="111"/>
    </location>
</feature>
<feature type="helix" evidence="5">
    <location>
        <begin position="117"/>
        <end position="131"/>
    </location>
</feature>
<feature type="strand" evidence="4">
    <location>
        <begin position="134"/>
        <end position="136"/>
    </location>
</feature>
<reference key="1">
    <citation type="journal article" date="1996" name="Nucleic Acids Res.">
        <title>Complete sequence analysis of the genome of the bacterium Mycoplasma pneumoniae.</title>
        <authorList>
            <person name="Himmelreich R."/>
            <person name="Hilbert H."/>
            <person name="Plagens H."/>
            <person name="Pirkl E."/>
            <person name="Li B.-C."/>
            <person name="Herrmann R."/>
        </authorList>
    </citation>
    <scope>NUCLEOTIDE SEQUENCE [LARGE SCALE GENOMIC DNA]</scope>
    <source>
        <strain>ATCC 29342 / M129 / Subtype 1</strain>
    </source>
</reference>
<sequence>MAKKTITRIAKINLLGGQAKPGPALASVGINMGEFTKQFNEKTKDKQGEMIPCVITAYNDKSFDFILKTTPVSILLKQAAKLEKGAKNAKTIVGKITMAKAKEIAQYKLVDLNANTVEAALKMVLGTAKQMGIEVIE</sequence>
<protein>
    <recommendedName>
        <fullName evidence="2">Large ribosomal subunit protein uL11</fullName>
    </recommendedName>
    <alternativeName>
        <fullName evidence="3">50S ribosomal protein L11</fullName>
    </alternativeName>
</protein>